<geneLocation type="mitochondrion"/>
<protein>
    <recommendedName>
        <fullName>NADH-ubiquinone oxidoreductase chain 4L</fullName>
        <ecNumber>7.1.1.2</ecNumber>
    </recommendedName>
    <alternativeName>
        <fullName>NADH dehydrogenase subunit 4L</fullName>
    </alternativeName>
</protein>
<comment type="function">
    <text evidence="1">Core subunit of the mitochondrial membrane respiratory chain NADH dehydrogenase (Complex I) which catalyzes electron transfer from NADH through the respiratory chain, using ubiquinone as an electron acceptor. Part of the enzyme membrane arm which is embedded in the lipid bilayer and involved in proton translocation.</text>
</comment>
<comment type="catalytic activity">
    <reaction evidence="1">
        <text>a ubiquinone + NADH + 5 H(+)(in) = a ubiquinol + NAD(+) + 4 H(+)(out)</text>
        <dbReference type="Rhea" id="RHEA:29091"/>
        <dbReference type="Rhea" id="RHEA-COMP:9565"/>
        <dbReference type="Rhea" id="RHEA-COMP:9566"/>
        <dbReference type="ChEBI" id="CHEBI:15378"/>
        <dbReference type="ChEBI" id="CHEBI:16389"/>
        <dbReference type="ChEBI" id="CHEBI:17976"/>
        <dbReference type="ChEBI" id="CHEBI:57540"/>
        <dbReference type="ChEBI" id="CHEBI:57945"/>
        <dbReference type="EC" id="7.1.1.2"/>
    </reaction>
    <physiologicalReaction direction="left-to-right" evidence="1">
        <dbReference type="Rhea" id="RHEA:29092"/>
    </physiologicalReaction>
</comment>
<comment type="subunit">
    <text evidence="2">Core subunit of respiratory chain NADH dehydrogenase (Complex I) which is composed of 45 different subunits.</text>
</comment>
<comment type="subcellular location">
    <subcellularLocation>
        <location evidence="2">Mitochondrion inner membrane</location>
        <topology evidence="3">Multi-pass membrane protein</topology>
    </subcellularLocation>
</comment>
<comment type="similarity">
    <text evidence="4">Belongs to the complex I subunit 4L family.</text>
</comment>
<organism>
    <name type="scientific">Lepus europaeus</name>
    <name type="common">European hare</name>
    <dbReference type="NCBI Taxonomy" id="9983"/>
    <lineage>
        <taxon>Eukaryota</taxon>
        <taxon>Metazoa</taxon>
        <taxon>Chordata</taxon>
        <taxon>Craniata</taxon>
        <taxon>Vertebrata</taxon>
        <taxon>Euteleostomi</taxon>
        <taxon>Mammalia</taxon>
        <taxon>Eutheria</taxon>
        <taxon>Euarchontoglires</taxon>
        <taxon>Glires</taxon>
        <taxon>Lagomorpha</taxon>
        <taxon>Leporidae</taxon>
        <taxon>Lepus</taxon>
    </lineage>
</organism>
<feature type="chain" id="PRO_0000275038" description="NADH-ubiquinone oxidoreductase chain 4L">
    <location>
        <begin position="1"/>
        <end position="98"/>
    </location>
</feature>
<feature type="transmembrane region" description="Helical" evidence="3">
    <location>
        <begin position="1"/>
        <end position="21"/>
    </location>
</feature>
<feature type="transmembrane region" description="Helical" evidence="3">
    <location>
        <begin position="29"/>
        <end position="49"/>
    </location>
</feature>
<feature type="transmembrane region" description="Helical" evidence="3">
    <location>
        <begin position="61"/>
        <end position="81"/>
    </location>
</feature>
<sequence length="98" mass="10963">MPSIYVNIFLAFIFALLGMLIYRSHLMSSLLCLEGMMLSLFILITLTALNMHFTLSFMFPIVLLVFAACEAAIGLALLVMVSNTYGMDYVQNLNLLQC</sequence>
<name>NU4LM_LEPEU</name>
<dbReference type="EC" id="7.1.1.2"/>
<dbReference type="EMBL" id="AJ421471">
    <property type="protein sequence ID" value="CAD13289.1"/>
    <property type="molecule type" value="Genomic_DNA"/>
</dbReference>
<dbReference type="RefSeq" id="NP_659333.1">
    <property type="nucleotide sequence ID" value="NC_004028.1"/>
</dbReference>
<dbReference type="SMR" id="Q8LWW8"/>
<dbReference type="GeneID" id="805152"/>
<dbReference type="CTD" id="4539"/>
<dbReference type="GO" id="GO:0005743">
    <property type="term" value="C:mitochondrial inner membrane"/>
    <property type="evidence" value="ECO:0000250"/>
    <property type="project" value="UniProtKB"/>
</dbReference>
<dbReference type="GO" id="GO:0045271">
    <property type="term" value="C:respiratory chain complex I"/>
    <property type="evidence" value="ECO:0000250"/>
    <property type="project" value="UniProtKB"/>
</dbReference>
<dbReference type="GO" id="GO:0008137">
    <property type="term" value="F:NADH dehydrogenase (ubiquinone) activity"/>
    <property type="evidence" value="ECO:0000250"/>
    <property type="project" value="UniProtKB"/>
</dbReference>
<dbReference type="GO" id="GO:0042773">
    <property type="term" value="P:ATP synthesis coupled electron transport"/>
    <property type="evidence" value="ECO:0007669"/>
    <property type="project" value="InterPro"/>
</dbReference>
<dbReference type="FunFam" id="1.10.287.3510:FF:000002">
    <property type="entry name" value="NADH-ubiquinone oxidoreductase chain 4L"/>
    <property type="match status" value="1"/>
</dbReference>
<dbReference type="Gene3D" id="1.10.287.3510">
    <property type="match status" value="1"/>
</dbReference>
<dbReference type="InterPro" id="IPR001133">
    <property type="entry name" value="NADH_UbQ_OxRdtase_chain4L/K"/>
</dbReference>
<dbReference type="InterPro" id="IPR039428">
    <property type="entry name" value="NUOK/Mnh_C1-like"/>
</dbReference>
<dbReference type="PANTHER" id="PTHR11434:SF0">
    <property type="entry name" value="NADH-UBIQUINONE OXIDOREDUCTASE CHAIN 4L"/>
    <property type="match status" value="1"/>
</dbReference>
<dbReference type="PANTHER" id="PTHR11434">
    <property type="entry name" value="NADH-UBIQUINONE OXIDOREDUCTASE SUBUNIT ND4L"/>
    <property type="match status" value="1"/>
</dbReference>
<dbReference type="Pfam" id="PF00420">
    <property type="entry name" value="Oxidored_q2"/>
    <property type="match status" value="1"/>
</dbReference>
<proteinExistence type="inferred from homology"/>
<gene>
    <name type="primary">MT-ND4L</name>
    <name type="synonym">MTND4L</name>
    <name type="synonym">NADH4L</name>
    <name type="synonym">ND4L</name>
</gene>
<reference key="1">
    <citation type="journal article" date="2002" name="Proc. Natl. Acad. Sci. U.S.A.">
        <title>Mammalian mitogenomic relationships and the root of the eutherian tree.</title>
        <authorList>
            <person name="Arnason U."/>
            <person name="Adegoke J.A."/>
            <person name="Bodin K."/>
            <person name="Born E.W."/>
            <person name="Esa Y.B."/>
            <person name="Gullberg A."/>
            <person name="Nilsson M."/>
            <person name="Short R.V."/>
            <person name="Xu X."/>
            <person name="Janke A."/>
        </authorList>
    </citation>
    <scope>NUCLEOTIDE SEQUENCE [GENOMIC DNA]</scope>
    <source>
        <tissue>Liver</tissue>
    </source>
</reference>
<accession>Q8LWW8</accession>
<keyword id="KW-0249">Electron transport</keyword>
<keyword id="KW-0472">Membrane</keyword>
<keyword id="KW-0496">Mitochondrion</keyword>
<keyword id="KW-0999">Mitochondrion inner membrane</keyword>
<keyword id="KW-0520">NAD</keyword>
<keyword id="KW-0679">Respiratory chain</keyword>
<keyword id="KW-1278">Translocase</keyword>
<keyword id="KW-0812">Transmembrane</keyword>
<keyword id="KW-1133">Transmembrane helix</keyword>
<keyword id="KW-0813">Transport</keyword>
<keyword id="KW-0830">Ubiquinone</keyword>
<evidence type="ECO:0000250" key="1">
    <source>
        <dbReference type="UniProtKB" id="P03901"/>
    </source>
</evidence>
<evidence type="ECO:0000250" key="2">
    <source>
        <dbReference type="UniProtKB" id="P03902"/>
    </source>
</evidence>
<evidence type="ECO:0000255" key="3"/>
<evidence type="ECO:0000305" key="4"/>